<dbReference type="EC" id="6.3.4.20" evidence="1"/>
<dbReference type="EMBL" id="CP000031">
    <property type="protein sequence ID" value="AAV96972.1"/>
    <property type="molecule type" value="Genomic_DNA"/>
</dbReference>
<dbReference type="RefSeq" id="WP_011049429.1">
    <property type="nucleotide sequence ID" value="NC_003911.12"/>
</dbReference>
<dbReference type="SMR" id="Q5LM13"/>
<dbReference type="STRING" id="246200.SPO3751"/>
<dbReference type="PaxDb" id="246200-SPO3751"/>
<dbReference type="DNASU" id="3195766"/>
<dbReference type="KEGG" id="sil:SPO3751"/>
<dbReference type="eggNOG" id="COG0603">
    <property type="taxonomic scope" value="Bacteria"/>
</dbReference>
<dbReference type="HOGENOM" id="CLU_081854_1_0_5"/>
<dbReference type="OrthoDB" id="9789567at2"/>
<dbReference type="UniPathway" id="UPA00391"/>
<dbReference type="Proteomes" id="UP000001023">
    <property type="component" value="Chromosome"/>
</dbReference>
<dbReference type="GO" id="GO:0005524">
    <property type="term" value="F:ATP binding"/>
    <property type="evidence" value="ECO:0007669"/>
    <property type="project" value="UniProtKB-UniRule"/>
</dbReference>
<dbReference type="GO" id="GO:0016879">
    <property type="term" value="F:ligase activity, forming carbon-nitrogen bonds"/>
    <property type="evidence" value="ECO:0007669"/>
    <property type="project" value="UniProtKB-UniRule"/>
</dbReference>
<dbReference type="GO" id="GO:0008270">
    <property type="term" value="F:zinc ion binding"/>
    <property type="evidence" value="ECO:0007669"/>
    <property type="project" value="UniProtKB-UniRule"/>
</dbReference>
<dbReference type="GO" id="GO:0008616">
    <property type="term" value="P:queuosine biosynthetic process"/>
    <property type="evidence" value="ECO:0007669"/>
    <property type="project" value="UniProtKB-UniRule"/>
</dbReference>
<dbReference type="CDD" id="cd01995">
    <property type="entry name" value="QueC-like"/>
    <property type="match status" value="1"/>
</dbReference>
<dbReference type="Gene3D" id="3.40.50.620">
    <property type="entry name" value="HUPs"/>
    <property type="match status" value="1"/>
</dbReference>
<dbReference type="HAMAP" id="MF_01633">
    <property type="entry name" value="QueC"/>
    <property type="match status" value="1"/>
</dbReference>
<dbReference type="InterPro" id="IPR018317">
    <property type="entry name" value="QueC"/>
</dbReference>
<dbReference type="InterPro" id="IPR014729">
    <property type="entry name" value="Rossmann-like_a/b/a_fold"/>
</dbReference>
<dbReference type="NCBIfam" id="TIGR00364">
    <property type="entry name" value="7-cyano-7-deazaguanine synthase QueC"/>
    <property type="match status" value="1"/>
</dbReference>
<dbReference type="PANTHER" id="PTHR42914">
    <property type="entry name" value="7-CYANO-7-DEAZAGUANINE SYNTHASE"/>
    <property type="match status" value="1"/>
</dbReference>
<dbReference type="PANTHER" id="PTHR42914:SF1">
    <property type="entry name" value="7-CYANO-7-DEAZAGUANINE SYNTHASE"/>
    <property type="match status" value="1"/>
</dbReference>
<dbReference type="Pfam" id="PF06508">
    <property type="entry name" value="QueC"/>
    <property type="match status" value="1"/>
</dbReference>
<dbReference type="PIRSF" id="PIRSF006293">
    <property type="entry name" value="ExsB"/>
    <property type="match status" value="1"/>
</dbReference>
<dbReference type="SUPFAM" id="SSF52402">
    <property type="entry name" value="Adenine nucleotide alpha hydrolases-like"/>
    <property type="match status" value="1"/>
</dbReference>
<sequence>MKTLVICSGGLDSVSLAHKVAAEHDLIGLISFDYGQRHRKELDFAARAATRLGVPHDLIDMRQIGAHLSGSALTDDVDVPDGHYAEDTMKITVVPNRNAIMLAIAFGIAAAKQADAVATAVHGGDHFIYPDCRPGFTQAFEAMQAQALDGYASVRLYTPFVHEPKSAIVTEGERHNTPFADTWSCYKGGEVHCGRCGTCVERREAFHLAGVADPTPYADPEFWRAAVEGR</sequence>
<accession>Q5LM13</accession>
<reference key="1">
    <citation type="journal article" date="2004" name="Nature">
        <title>Genome sequence of Silicibacter pomeroyi reveals adaptations to the marine environment.</title>
        <authorList>
            <person name="Moran M.A."/>
            <person name="Buchan A."/>
            <person name="Gonzalez J.M."/>
            <person name="Heidelberg J.F."/>
            <person name="Whitman W.B."/>
            <person name="Kiene R.P."/>
            <person name="Henriksen J.R."/>
            <person name="King G.M."/>
            <person name="Belas R."/>
            <person name="Fuqua C."/>
            <person name="Brinkac L.M."/>
            <person name="Lewis M."/>
            <person name="Johri S."/>
            <person name="Weaver B."/>
            <person name="Pai G."/>
            <person name="Eisen J.A."/>
            <person name="Rahe E."/>
            <person name="Sheldon W.M."/>
            <person name="Ye W."/>
            <person name="Miller T.R."/>
            <person name="Carlton J."/>
            <person name="Rasko D.A."/>
            <person name="Paulsen I.T."/>
            <person name="Ren Q."/>
            <person name="Daugherty S.C."/>
            <person name="DeBoy R.T."/>
            <person name="Dodson R.J."/>
            <person name="Durkin A.S."/>
            <person name="Madupu R."/>
            <person name="Nelson W.C."/>
            <person name="Sullivan S.A."/>
            <person name="Rosovitz M.J."/>
            <person name="Haft D.H."/>
            <person name="Selengut J."/>
            <person name="Ward N."/>
        </authorList>
    </citation>
    <scope>NUCLEOTIDE SEQUENCE [LARGE SCALE GENOMIC DNA]</scope>
    <source>
        <strain>ATCC 700808 / DSM 15171 / DSS-3</strain>
    </source>
</reference>
<reference key="2">
    <citation type="journal article" date="2014" name="Stand. Genomic Sci.">
        <title>An updated genome annotation for the model marine bacterium Ruegeria pomeroyi DSS-3.</title>
        <authorList>
            <person name="Rivers A.R."/>
            <person name="Smith C.B."/>
            <person name="Moran M.A."/>
        </authorList>
    </citation>
    <scope>GENOME REANNOTATION</scope>
    <source>
        <strain>ATCC 700808 / DSM 15171 / DSS-3</strain>
    </source>
</reference>
<organism>
    <name type="scientific">Ruegeria pomeroyi (strain ATCC 700808 / DSM 15171 / DSS-3)</name>
    <name type="common">Silicibacter pomeroyi</name>
    <dbReference type="NCBI Taxonomy" id="246200"/>
    <lineage>
        <taxon>Bacteria</taxon>
        <taxon>Pseudomonadati</taxon>
        <taxon>Pseudomonadota</taxon>
        <taxon>Alphaproteobacteria</taxon>
        <taxon>Rhodobacterales</taxon>
        <taxon>Roseobacteraceae</taxon>
        <taxon>Ruegeria</taxon>
    </lineage>
</organism>
<name>QUEC_RUEPO</name>
<proteinExistence type="inferred from homology"/>
<keyword id="KW-0067">ATP-binding</keyword>
<keyword id="KW-0436">Ligase</keyword>
<keyword id="KW-0479">Metal-binding</keyword>
<keyword id="KW-0547">Nucleotide-binding</keyword>
<keyword id="KW-0671">Queuosine biosynthesis</keyword>
<keyword id="KW-1185">Reference proteome</keyword>
<keyword id="KW-0862">Zinc</keyword>
<feature type="chain" id="PRO_0000246926" description="7-cyano-7-deazaguanine synthase">
    <location>
        <begin position="1"/>
        <end position="230"/>
    </location>
</feature>
<feature type="binding site" evidence="1">
    <location>
        <begin position="7"/>
        <end position="17"/>
    </location>
    <ligand>
        <name>ATP</name>
        <dbReference type="ChEBI" id="CHEBI:30616"/>
    </ligand>
</feature>
<feature type="binding site" evidence="1">
    <location>
        <position position="185"/>
    </location>
    <ligand>
        <name>Zn(2+)</name>
        <dbReference type="ChEBI" id="CHEBI:29105"/>
    </ligand>
</feature>
<feature type="binding site" evidence="1">
    <location>
        <position position="193"/>
    </location>
    <ligand>
        <name>Zn(2+)</name>
        <dbReference type="ChEBI" id="CHEBI:29105"/>
    </ligand>
</feature>
<feature type="binding site" evidence="1">
    <location>
        <position position="196"/>
    </location>
    <ligand>
        <name>Zn(2+)</name>
        <dbReference type="ChEBI" id="CHEBI:29105"/>
    </ligand>
</feature>
<feature type="binding site" evidence="1">
    <location>
        <position position="199"/>
    </location>
    <ligand>
        <name>Zn(2+)</name>
        <dbReference type="ChEBI" id="CHEBI:29105"/>
    </ligand>
</feature>
<protein>
    <recommendedName>
        <fullName evidence="1">7-cyano-7-deazaguanine synthase</fullName>
        <ecNumber evidence="1">6.3.4.20</ecNumber>
    </recommendedName>
    <alternativeName>
        <fullName evidence="1">7-cyano-7-carbaguanine synthase</fullName>
    </alternativeName>
    <alternativeName>
        <fullName evidence="1">PreQ(0) synthase</fullName>
    </alternativeName>
    <alternativeName>
        <fullName evidence="1">Queuosine biosynthesis protein QueC</fullName>
    </alternativeName>
</protein>
<comment type="function">
    <text evidence="1">Catalyzes the ATP-dependent conversion of 7-carboxy-7-deazaguanine (CDG) to 7-cyano-7-deazaguanine (preQ(0)).</text>
</comment>
<comment type="catalytic activity">
    <reaction evidence="1">
        <text>7-carboxy-7-deazaguanine + NH4(+) + ATP = 7-cyano-7-deazaguanine + ADP + phosphate + H2O + H(+)</text>
        <dbReference type="Rhea" id="RHEA:27982"/>
        <dbReference type="ChEBI" id="CHEBI:15377"/>
        <dbReference type="ChEBI" id="CHEBI:15378"/>
        <dbReference type="ChEBI" id="CHEBI:28938"/>
        <dbReference type="ChEBI" id="CHEBI:30616"/>
        <dbReference type="ChEBI" id="CHEBI:43474"/>
        <dbReference type="ChEBI" id="CHEBI:45075"/>
        <dbReference type="ChEBI" id="CHEBI:61036"/>
        <dbReference type="ChEBI" id="CHEBI:456216"/>
        <dbReference type="EC" id="6.3.4.20"/>
    </reaction>
</comment>
<comment type="cofactor">
    <cofactor evidence="1">
        <name>Zn(2+)</name>
        <dbReference type="ChEBI" id="CHEBI:29105"/>
    </cofactor>
    <text evidence="1">Binds 1 zinc ion per subunit.</text>
</comment>
<comment type="pathway">
    <text evidence="1">Purine metabolism; 7-cyano-7-deazaguanine biosynthesis.</text>
</comment>
<comment type="similarity">
    <text evidence="1">Belongs to the QueC family.</text>
</comment>
<evidence type="ECO:0000255" key="1">
    <source>
        <dbReference type="HAMAP-Rule" id="MF_01633"/>
    </source>
</evidence>
<gene>
    <name evidence="1" type="primary">queC</name>
    <name type="ordered locus">SPO3751</name>
</gene>